<reference key="1">
    <citation type="submission" date="2004-06" db="EMBL/GenBank/DDBJ databases">
        <title>DHHC-containing proteins.</title>
        <authorList>
            <person name="Fukata M."/>
            <person name="Fukata Y."/>
            <person name="Bredt D.S."/>
        </authorList>
    </citation>
    <scope>NUCLEOTIDE SEQUENCE [MRNA]</scope>
    <source>
        <strain>C57BL/6J</strain>
        <tissue>Testis</tissue>
    </source>
</reference>
<reference key="2">
    <citation type="journal article" date="2009" name="PLoS Biol.">
        <title>Lineage-specific biology revealed by a finished genome assembly of the mouse.</title>
        <authorList>
            <person name="Church D.M."/>
            <person name="Goodstadt L."/>
            <person name="Hillier L.W."/>
            <person name="Zody M.C."/>
            <person name="Goldstein S."/>
            <person name="She X."/>
            <person name="Bult C.J."/>
            <person name="Agarwala R."/>
            <person name="Cherry J.L."/>
            <person name="DiCuccio M."/>
            <person name="Hlavina W."/>
            <person name="Kapustin Y."/>
            <person name="Meric P."/>
            <person name="Maglott D."/>
            <person name="Birtle Z."/>
            <person name="Marques A.C."/>
            <person name="Graves T."/>
            <person name="Zhou S."/>
            <person name="Teague B."/>
            <person name="Potamousis K."/>
            <person name="Churas C."/>
            <person name="Place M."/>
            <person name="Herschleb J."/>
            <person name="Runnheim R."/>
            <person name="Forrest D."/>
            <person name="Amos-Landgraf J."/>
            <person name="Schwartz D.C."/>
            <person name="Cheng Z."/>
            <person name="Lindblad-Toh K."/>
            <person name="Eichler E.E."/>
            <person name="Ponting C.P."/>
        </authorList>
    </citation>
    <scope>NUCLEOTIDE SEQUENCE [LARGE SCALE GENOMIC DNA]</scope>
    <source>
        <strain>C57BL/6J</strain>
    </source>
</reference>
<reference key="3">
    <citation type="journal article" date="2004" name="Genome Res.">
        <title>The status, quality, and expansion of the NIH full-length cDNA project: the Mammalian Gene Collection (MGC).</title>
        <authorList>
            <consortium name="The MGC Project Team"/>
        </authorList>
    </citation>
    <scope>NUCLEOTIDE SEQUENCE [LARGE SCALE MRNA]</scope>
    <source>
        <tissue>Testis</tissue>
    </source>
</reference>
<reference key="4">
    <citation type="journal article" date="2013" name="J. Biol. Chem.">
        <title>In silico screening for palmitoyl substrates reveals a role for DHHC1/3/10 (zDHHC1/3/11)-mediated neurochondrin palmitoylation in its targeting to Rab5-positive endosomes.</title>
        <authorList>
            <person name="Oku S."/>
            <person name="Takahashi N."/>
            <person name="Fukata Y."/>
            <person name="Fukata M."/>
        </authorList>
    </citation>
    <scope>FUNCTION</scope>
    <scope>CATALYTIC ACTIVITY</scope>
    <scope>SUBCELLULAR LOCATION</scope>
    <scope>MUTAGENESIS OF CYS-158</scope>
</reference>
<reference key="5">
    <citation type="journal article" date="2018" name="Cell. Mol. Immunol.">
        <title>ZDHHC11 modulates innate immune response to DNA virus by mediating MITA-IRF3 association.</title>
        <authorList>
            <person name="Liu Y."/>
            <person name="Zhou Q."/>
            <person name="Zhong L."/>
            <person name="Lin H."/>
            <person name="Hu M.M."/>
            <person name="Zhou Y."/>
            <person name="Shu H.B."/>
            <person name="Li S."/>
        </authorList>
    </citation>
    <scope>FUNCTION</scope>
    <scope>DISRUPTION PHENOTYPE</scope>
</reference>
<evidence type="ECO:0000250" key="1">
    <source>
        <dbReference type="UniProtKB" id="Q8IUH5"/>
    </source>
</evidence>
<evidence type="ECO:0000250" key="2">
    <source>
        <dbReference type="UniProtKB" id="Q9H8X9"/>
    </source>
</evidence>
<evidence type="ECO:0000255" key="3"/>
<evidence type="ECO:0000255" key="4">
    <source>
        <dbReference type="PROSITE-ProRule" id="PRU00067"/>
    </source>
</evidence>
<evidence type="ECO:0000256" key="5">
    <source>
        <dbReference type="SAM" id="MobiDB-lite"/>
    </source>
</evidence>
<evidence type="ECO:0000269" key="6">
    <source>
    </source>
</evidence>
<evidence type="ECO:0000269" key="7">
    <source>
    </source>
</evidence>
<evidence type="ECO:0000303" key="8">
    <source>
    </source>
</evidence>
<evidence type="ECO:0000305" key="9"/>
<evidence type="ECO:0000305" key="10">
    <source>
    </source>
</evidence>
<evidence type="ECO:0000312" key="11">
    <source>
        <dbReference type="MGI" id="MGI:1918414"/>
    </source>
</evidence>
<gene>
    <name evidence="11" type="primary">Zdhhc11</name>
</gene>
<proteinExistence type="evidence at protein level"/>
<comment type="function">
    <text evidence="2 6">Endoplasmic reticulum-localized palmitoyltransferase that could catalyze the addition of palmitate onto various protein substrates and be involved in a variety of cellular processes (PubMed:23687301). Has a palmitoyltransferase activity toward NCDN and regulates NCDN association with endosome membranes through this palmitoylation (PubMed:23687301). May play a role in cell proliferation (By similarity).</text>
</comment>
<comment type="function">
    <text evidence="7">Also has a palmitoyltransferase activity-independent function in DNA virus-triggered and CGAS-mediated innate immune response (PubMed:29429998). Functions as an adapter that recruits IRF3 to STING1 to promote the activation of that key transcriptional regulator of type I interferon (IFN)-dependent immune response (PubMed:29429998).</text>
</comment>
<comment type="catalytic activity">
    <reaction evidence="6">
        <text>L-cysteinyl-[protein] + hexadecanoyl-CoA = S-hexadecanoyl-L-cysteinyl-[protein] + CoA</text>
        <dbReference type="Rhea" id="RHEA:36683"/>
        <dbReference type="Rhea" id="RHEA-COMP:10131"/>
        <dbReference type="Rhea" id="RHEA-COMP:11032"/>
        <dbReference type="ChEBI" id="CHEBI:29950"/>
        <dbReference type="ChEBI" id="CHEBI:57287"/>
        <dbReference type="ChEBI" id="CHEBI:57379"/>
        <dbReference type="ChEBI" id="CHEBI:74151"/>
        <dbReference type="EC" id="2.3.1.225"/>
    </reaction>
    <physiologicalReaction direction="left-to-right" evidence="10">
        <dbReference type="Rhea" id="RHEA:36684"/>
    </physiologicalReaction>
</comment>
<comment type="subunit">
    <text evidence="2">Interacts with IRF3 and STING1; in presence of DNA viruses recruits IRF3 to STING1 promoting IRF3 phosphorylation and activation.</text>
</comment>
<comment type="subcellular location">
    <subcellularLocation>
        <location evidence="6">Endosome membrane</location>
        <topology evidence="3">Multi-pass membrane protein</topology>
    </subcellularLocation>
</comment>
<comment type="domain">
    <text evidence="1">The DHHC domain is required for palmitoyltransferase activity.</text>
</comment>
<comment type="disruption phenotype">
    <text evidence="7">Homozygous knockout mice are viable and do not show overt phenotype (PubMed:29429998). Composition and number of major immune cells is normal but mice are more susceptible to DNA-virus infection and death than their wild-type counterpart (PubMed:29429998).</text>
</comment>
<comment type="similarity">
    <text evidence="9">Belongs to the DHHC palmitoyltransferase family.</text>
</comment>
<dbReference type="EC" id="2.3.1.225" evidence="6"/>
<dbReference type="EMBL" id="AY668948">
    <property type="protein sequence ID" value="AAU89702.1"/>
    <property type="molecule type" value="mRNA"/>
</dbReference>
<dbReference type="EMBL" id="CT010471">
    <property type="status" value="NOT_ANNOTATED_CDS"/>
    <property type="molecule type" value="Genomic_DNA"/>
</dbReference>
<dbReference type="EMBL" id="BC116803">
    <property type="protein sequence ID" value="AAI16804.2"/>
    <property type="molecule type" value="mRNA"/>
</dbReference>
<dbReference type="EMBL" id="BC116807">
    <property type="protein sequence ID" value="AAI16808.2"/>
    <property type="molecule type" value="mRNA"/>
</dbReference>
<dbReference type="CCDS" id="CCDS36729.1"/>
<dbReference type="RefSeq" id="NP_081980.1">
    <property type="nucleotide sequence ID" value="NM_027704.3"/>
</dbReference>
<dbReference type="FunCoup" id="Q14AK4">
    <property type="interactions" value="159"/>
</dbReference>
<dbReference type="STRING" id="10090.ENSMUSP00000089075"/>
<dbReference type="PhosphoSitePlus" id="Q14AK4"/>
<dbReference type="SwissPalm" id="Q14AK4"/>
<dbReference type="PaxDb" id="10090-ENSMUSP00000089075"/>
<dbReference type="ProteomicsDB" id="275133"/>
<dbReference type="Ensembl" id="ENSMUST00000091493.6">
    <property type="protein sequence ID" value="ENSMUSP00000089075.5"/>
    <property type="gene ID" value="ENSMUSG00000069189.6"/>
</dbReference>
<dbReference type="GeneID" id="71164"/>
<dbReference type="KEGG" id="mmu:71164"/>
<dbReference type="UCSC" id="uc007ren.1">
    <property type="organism name" value="mouse"/>
</dbReference>
<dbReference type="AGR" id="MGI:1918414"/>
<dbReference type="CTD" id="79844"/>
<dbReference type="MGI" id="MGI:1918414">
    <property type="gene designation" value="Zdhhc11"/>
</dbReference>
<dbReference type="VEuPathDB" id="HostDB:ENSMUSG00000069189"/>
<dbReference type="eggNOG" id="KOG1311">
    <property type="taxonomic scope" value="Eukaryota"/>
</dbReference>
<dbReference type="GeneTree" id="ENSGT00940000161608"/>
<dbReference type="HOGENOM" id="CLU_020283_1_1_1"/>
<dbReference type="InParanoid" id="Q14AK4"/>
<dbReference type="OMA" id="ICGFVEP"/>
<dbReference type="OrthoDB" id="9909019at2759"/>
<dbReference type="PhylomeDB" id="Q14AK4"/>
<dbReference type="TreeFam" id="TF317498"/>
<dbReference type="BioGRID-ORCS" id="71164">
    <property type="hits" value="2 hits in 78 CRISPR screens"/>
</dbReference>
<dbReference type="ChiTaRS" id="Zdhhc11">
    <property type="organism name" value="mouse"/>
</dbReference>
<dbReference type="PRO" id="PR:Q14AK4"/>
<dbReference type="Proteomes" id="UP000000589">
    <property type="component" value="Chromosome 13"/>
</dbReference>
<dbReference type="RNAct" id="Q14AK4">
    <property type="molecule type" value="protein"/>
</dbReference>
<dbReference type="Bgee" id="ENSMUSG00000069189">
    <property type="expression patterns" value="Expressed in spermatid and 4 other cell types or tissues"/>
</dbReference>
<dbReference type="ExpressionAtlas" id="Q14AK4">
    <property type="expression patterns" value="baseline and differential"/>
</dbReference>
<dbReference type="GO" id="GO:0010008">
    <property type="term" value="C:endosome membrane"/>
    <property type="evidence" value="ECO:0000314"/>
    <property type="project" value="UniProtKB"/>
</dbReference>
<dbReference type="GO" id="GO:0019706">
    <property type="term" value="F:protein-cysteine S-palmitoyltransferase activity"/>
    <property type="evidence" value="ECO:0000314"/>
    <property type="project" value="UniProtKB"/>
</dbReference>
<dbReference type="GO" id="GO:0140374">
    <property type="term" value="P:antiviral innate immune response"/>
    <property type="evidence" value="ECO:0000315"/>
    <property type="project" value="UniProtKB"/>
</dbReference>
<dbReference type="GO" id="GO:0018230">
    <property type="term" value="P:peptidyl-L-cysteine S-palmitoylation"/>
    <property type="evidence" value="ECO:0000314"/>
    <property type="project" value="UniProtKB"/>
</dbReference>
<dbReference type="GO" id="GO:0002230">
    <property type="term" value="P:positive regulation of defense response to virus by host"/>
    <property type="evidence" value="ECO:0000315"/>
    <property type="project" value="UniProtKB"/>
</dbReference>
<dbReference type="InterPro" id="IPR001594">
    <property type="entry name" value="Palmitoyltrfase_DHHC"/>
</dbReference>
<dbReference type="InterPro" id="IPR039859">
    <property type="entry name" value="PFA4/ZDH16/20/ERF2-like"/>
</dbReference>
<dbReference type="PANTHER" id="PTHR22883:SF22">
    <property type="entry name" value="PALMITOYLTRANSFERASE ZDHHC11-RELATED"/>
    <property type="match status" value="1"/>
</dbReference>
<dbReference type="PANTHER" id="PTHR22883">
    <property type="entry name" value="ZINC FINGER DHHC DOMAIN CONTAINING PROTEIN"/>
    <property type="match status" value="1"/>
</dbReference>
<dbReference type="Pfam" id="PF01529">
    <property type="entry name" value="DHHC"/>
    <property type="match status" value="1"/>
</dbReference>
<dbReference type="PROSITE" id="PS50216">
    <property type="entry name" value="DHHC"/>
    <property type="match status" value="1"/>
</dbReference>
<name>ZDH11_MOUSE</name>
<organism>
    <name type="scientific">Mus musculus</name>
    <name type="common">Mouse</name>
    <dbReference type="NCBI Taxonomy" id="10090"/>
    <lineage>
        <taxon>Eukaryota</taxon>
        <taxon>Metazoa</taxon>
        <taxon>Chordata</taxon>
        <taxon>Craniata</taxon>
        <taxon>Vertebrata</taxon>
        <taxon>Euteleostomi</taxon>
        <taxon>Mammalia</taxon>
        <taxon>Eutheria</taxon>
        <taxon>Euarchontoglires</taxon>
        <taxon>Glires</taxon>
        <taxon>Rodentia</taxon>
        <taxon>Myomorpha</taxon>
        <taxon>Muroidea</taxon>
        <taxon>Muridae</taxon>
        <taxon>Murinae</taxon>
        <taxon>Mus</taxon>
        <taxon>Mus</taxon>
    </lineage>
</organism>
<sequence>MKEMNICGINKNWVLPEAQENNVKKFLPRPLSRVNGWSPPLHSFQAISWITYLAMSIVTFGIFIPFLPYSWKYAANIVMGGVFIFHLIVHLIAITIDPADTNVRLKKDYTQPVPAFDRSKHTHVIQNQYCHLCEVTASKKAKHCSACNKCVSGFDHHCKWLNNCVGRRNYWFFFWSVASAAVGILGVMIILCYICIQYFVNPDELRTDPLYKEIISENTWLLFLSLWPVPVKTPIVLSIAVMALLLAIASFVMLGHLLIFHLYLITKNMSTFDYLMKTRFKKNLHPAEEKELPLQKKGDLPQEKSDNWAWPKSPPRVGSQKFPVSTLSPKSSVCFVASPPKICHSED</sequence>
<protein>
    <recommendedName>
        <fullName evidence="10">Palmitoyltransferase ZDHHC11</fullName>
        <ecNumber evidence="6">2.3.1.225</ecNumber>
    </recommendedName>
    <alternativeName>
        <fullName evidence="8">DHHC-containing protein 10</fullName>
        <shortName evidence="8">DHHC10(z11)</shortName>
    </alternativeName>
    <alternativeName>
        <fullName>Zinc finger DHHC domain-containing protein 11</fullName>
        <shortName>DHHC-11</shortName>
    </alternativeName>
</protein>
<accession>Q14AK4</accession>
<accession>Q5Y5T4</accession>
<keyword id="KW-0012">Acyltransferase</keyword>
<keyword id="KW-0967">Endosome</keyword>
<keyword id="KW-0449">Lipoprotein</keyword>
<keyword id="KW-0472">Membrane</keyword>
<keyword id="KW-0564">Palmitate</keyword>
<keyword id="KW-1185">Reference proteome</keyword>
<keyword id="KW-0808">Transferase</keyword>
<keyword id="KW-0812">Transmembrane</keyword>
<keyword id="KW-1133">Transmembrane helix</keyword>
<feature type="chain" id="PRO_0000413764" description="Palmitoyltransferase ZDHHC11">
    <location>
        <begin position="1"/>
        <end position="347"/>
    </location>
</feature>
<feature type="topological domain" description="Cytoplasmic" evidence="9">
    <location>
        <begin position="1"/>
        <end position="46"/>
    </location>
</feature>
<feature type="transmembrane region" description="Helical" evidence="3">
    <location>
        <begin position="47"/>
        <end position="67"/>
    </location>
</feature>
<feature type="topological domain" description="Lumenal" evidence="9">
    <location>
        <begin position="68"/>
        <end position="75"/>
    </location>
</feature>
<feature type="transmembrane region" description="Helical" evidence="3">
    <location>
        <begin position="76"/>
        <end position="96"/>
    </location>
</feature>
<feature type="topological domain" description="Cytoplasmic" evidence="9">
    <location>
        <begin position="97"/>
        <end position="170"/>
    </location>
</feature>
<feature type="transmembrane region" description="Helical" evidence="3">
    <location>
        <begin position="171"/>
        <end position="191"/>
    </location>
</feature>
<feature type="topological domain" description="Lumenal" evidence="9">
    <location>
        <begin position="192"/>
        <end position="234"/>
    </location>
</feature>
<feature type="transmembrane region" description="Helical" evidence="3">
    <location>
        <begin position="235"/>
        <end position="255"/>
    </location>
</feature>
<feature type="topological domain" description="Cytoplasmic" evidence="9">
    <location>
        <begin position="256"/>
        <end position="347"/>
    </location>
</feature>
<feature type="domain" description="DHHC" evidence="4">
    <location>
        <begin position="128"/>
        <end position="178"/>
    </location>
</feature>
<feature type="region of interest" description="Disordered" evidence="5">
    <location>
        <begin position="291"/>
        <end position="332"/>
    </location>
</feature>
<feature type="compositionally biased region" description="Basic and acidic residues" evidence="5">
    <location>
        <begin position="291"/>
        <end position="306"/>
    </location>
</feature>
<feature type="compositionally biased region" description="Polar residues" evidence="5">
    <location>
        <begin position="322"/>
        <end position="331"/>
    </location>
</feature>
<feature type="active site" description="S-palmitoyl cysteine intermediate" evidence="4 10">
    <location>
        <position position="158"/>
    </location>
</feature>
<feature type="mutagenesis site" description="Loss of protein-cysteine S-palmitoyltransferase activity." evidence="10">
    <original>C</original>
    <variation>S</variation>
    <location>
        <position position="158"/>
    </location>
</feature>